<gene>
    <name evidence="1" type="primary">gpmA</name>
    <name type="ordered locus">TC_0095</name>
</gene>
<accession>Q9PLK4</accession>
<comment type="function">
    <text evidence="1">Catalyzes the interconversion of 2-phosphoglycerate and 3-phosphoglycerate.</text>
</comment>
<comment type="catalytic activity">
    <reaction evidence="1">
        <text>(2R)-2-phosphoglycerate = (2R)-3-phosphoglycerate</text>
        <dbReference type="Rhea" id="RHEA:15901"/>
        <dbReference type="ChEBI" id="CHEBI:58272"/>
        <dbReference type="ChEBI" id="CHEBI:58289"/>
        <dbReference type="EC" id="5.4.2.11"/>
    </reaction>
</comment>
<comment type="pathway">
    <text evidence="1">Carbohydrate degradation; glycolysis; pyruvate from D-glyceraldehyde 3-phosphate: step 3/5.</text>
</comment>
<comment type="similarity">
    <text evidence="1">Belongs to the phosphoglycerate mutase family. BPG-dependent PGAM subfamily.</text>
</comment>
<organism>
    <name type="scientific">Chlamydia muridarum (strain MoPn / Nigg)</name>
    <dbReference type="NCBI Taxonomy" id="243161"/>
    <lineage>
        <taxon>Bacteria</taxon>
        <taxon>Pseudomonadati</taxon>
        <taxon>Chlamydiota</taxon>
        <taxon>Chlamydiia</taxon>
        <taxon>Chlamydiales</taxon>
        <taxon>Chlamydiaceae</taxon>
        <taxon>Chlamydia/Chlamydophila group</taxon>
        <taxon>Chlamydia</taxon>
    </lineage>
</organism>
<evidence type="ECO:0000255" key="1">
    <source>
        <dbReference type="HAMAP-Rule" id="MF_01039"/>
    </source>
</evidence>
<sequence>MTLLILLRHGQSVWNQKNLFTGWVDIPLSQQGIQEALTAGEAIKNLPIDCIFTSTLVRSLMTALLAMTNHSSKKIPYIIHEERPDMSRIHSEKELEQMIPLFQSSALNERMYGELQGKNKQEVAEQFGEEQVRLWRRSYKIAPPQGESLFDTAQRTLPYFQKRIFPLIQQGKNIFISAHGNSLRSLIMDLEKLTEEEVLSLELPTGKPIVYEWTEQKFTKSALSFG</sequence>
<dbReference type="EC" id="5.4.2.11" evidence="1"/>
<dbReference type="EMBL" id="AE002160">
    <property type="protein sequence ID" value="AAF38975.1"/>
    <property type="molecule type" value="Genomic_DNA"/>
</dbReference>
<dbReference type="PIR" id="D81741">
    <property type="entry name" value="D81741"/>
</dbReference>
<dbReference type="RefSeq" id="WP_010229353.1">
    <property type="nucleotide sequence ID" value="NZ_CP063055.1"/>
</dbReference>
<dbReference type="SMR" id="Q9PLK4"/>
<dbReference type="GeneID" id="1245625"/>
<dbReference type="KEGG" id="cmu:TC_0095"/>
<dbReference type="eggNOG" id="COG0588">
    <property type="taxonomic scope" value="Bacteria"/>
</dbReference>
<dbReference type="HOGENOM" id="CLU_033323_1_4_0"/>
<dbReference type="OrthoDB" id="9781415at2"/>
<dbReference type="UniPathway" id="UPA00109">
    <property type="reaction ID" value="UER00186"/>
</dbReference>
<dbReference type="Proteomes" id="UP000000800">
    <property type="component" value="Chromosome"/>
</dbReference>
<dbReference type="GO" id="GO:0004619">
    <property type="term" value="F:phosphoglycerate mutase activity"/>
    <property type="evidence" value="ECO:0007669"/>
    <property type="project" value="UniProtKB-EC"/>
</dbReference>
<dbReference type="GO" id="GO:0006094">
    <property type="term" value="P:gluconeogenesis"/>
    <property type="evidence" value="ECO:0007669"/>
    <property type="project" value="UniProtKB-UniRule"/>
</dbReference>
<dbReference type="GO" id="GO:0006096">
    <property type="term" value="P:glycolytic process"/>
    <property type="evidence" value="ECO:0007669"/>
    <property type="project" value="UniProtKB-UniRule"/>
</dbReference>
<dbReference type="CDD" id="cd07067">
    <property type="entry name" value="HP_PGM_like"/>
    <property type="match status" value="1"/>
</dbReference>
<dbReference type="Gene3D" id="3.40.50.1240">
    <property type="entry name" value="Phosphoglycerate mutase-like"/>
    <property type="match status" value="1"/>
</dbReference>
<dbReference type="HAMAP" id="MF_01039">
    <property type="entry name" value="PGAM_GpmA"/>
    <property type="match status" value="1"/>
</dbReference>
<dbReference type="InterPro" id="IPR013078">
    <property type="entry name" value="His_Pase_superF_clade-1"/>
</dbReference>
<dbReference type="InterPro" id="IPR029033">
    <property type="entry name" value="His_PPase_superfam"/>
</dbReference>
<dbReference type="InterPro" id="IPR001345">
    <property type="entry name" value="PG/BPGM_mutase_AS"/>
</dbReference>
<dbReference type="InterPro" id="IPR005952">
    <property type="entry name" value="Phosphogly_mut1"/>
</dbReference>
<dbReference type="NCBIfam" id="NF002217">
    <property type="entry name" value="PRK01112.1"/>
    <property type="match status" value="1"/>
</dbReference>
<dbReference type="PANTHER" id="PTHR11931">
    <property type="entry name" value="PHOSPHOGLYCERATE MUTASE"/>
    <property type="match status" value="1"/>
</dbReference>
<dbReference type="Pfam" id="PF00300">
    <property type="entry name" value="His_Phos_1"/>
    <property type="match status" value="1"/>
</dbReference>
<dbReference type="PIRSF" id="PIRSF000709">
    <property type="entry name" value="6PFK_2-Ptase"/>
    <property type="match status" value="1"/>
</dbReference>
<dbReference type="SMART" id="SM00855">
    <property type="entry name" value="PGAM"/>
    <property type="match status" value="1"/>
</dbReference>
<dbReference type="SUPFAM" id="SSF53254">
    <property type="entry name" value="Phosphoglycerate mutase-like"/>
    <property type="match status" value="1"/>
</dbReference>
<dbReference type="PROSITE" id="PS00175">
    <property type="entry name" value="PG_MUTASE"/>
    <property type="match status" value="1"/>
</dbReference>
<keyword id="KW-0312">Gluconeogenesis</keyword>
<keyword id="KW-0324">Glycolysis</keyword>
<keyword id="KW-0413">Isomerase</keyword>
<feature type="chain" id="PRO_0000179864" description="2,3-bisphosphoglycerate-dependent phosphoglycerate mutase">
    <location>
        <begin position="1"/>
        <end position="226"/>
    </location>
</feature>
<feature type="active site" description="Tele-phosphohistidine intermediate" evidence="1">
    <location>
        <position position="9"/>
    </location>
</feature>
<feature type="active site" description="Proton donor/acceptor" evidence="1">
    <location>
        <position position="109"/>
    </location>
</feature>
<feature type="binding site" evidence="1">
    <location>
        <begin position="8"/>
        <end position="15"/>
    </location>
    <ligand>
        <name>substrate</name>
    </ligand>
</feature>
<feature type="binding site" evidence="1">
    <location>
        <begin position="21"/>
        <end position="22"/>
    </location>
    <ligand>
        <name>substrate</name>
    </ligand>
</feature>
<feature type="binding site" evidence="1">
    <location>
        <position position="58"/>
    </location>
    <ligand>
        <name>substrate</name>
    </ligand>
</feature>
<feature type="binding site" evidence="1">
    <location>
        <begin position="109"/>
        <end position="112"/>
    </location>
    <ligand>
        <name>substrate</name>
    </ligand>
</feature>
<feature type="binding site" evidence="1">
    <location>
        <position position="120"/>
    </location>
    <ligand>
        <name>substrate</name>
    </ligand>
</feature>
<feature type="binding site" evidence="1">
    <location>
        <begin position="136"/>
        <end position="137"/>
    </location>
    <ligand>
        <name>substrate</name>
    </ligand>
</feature>
<feature type="binding site" evidence="1">
    <location>
        <begin position="180"/>
        <end position="181"/>
    </location>
    <ligand>
        <name>substrate</name>
    </ligand>
</feature>
<feature type="site" description="Transition state stabilizer" evidence="1">
    <location>
        <position position="179"/>
    </location>
</feature>
<protein>
    <recommendedName>
        <fullName evidence="1">2,3-bisphosphoglycerate-dependent phosphoglycerate mutase</fullName>
        <shortName evidence="1">BPG-dependent PGAM</shortName>
        <shortName evidence="1">PGAM</shortName>
        <shortName evidence="1">Phosphoglyceromutase</shortName>
        <shortName evidence="1">dPGM</shortName>
        <ecNumber evidence="1">5.4.2.11</ecNumber>
    </recommendedName>
</protein>
<proteinExistence type="inferred from homology"/>
<name>GPMA_CHLMU</name>
<reference key="1">
    <citation type="journal article" date="2000" name="Nucleic Acids Res.">
        <title>Genome sequences of Chlamydia trachomatis MoPn and Chlamydia pneumoniae AR39.</title>
        <authorList>
            <person name="Read T.D."/>
            <person name="Brunham R.C."/>
            <person name="Shen C."/>
            <person name="Gill S.R."/>
            <person name="Heidelberg J.F."/>
            <person name="White O."/>
            <person name="Hickey E.K."/>
            <person name="Peterson J.D."/>
            <person name="Utterback T.R."/>
            <person name="Berry K.J."/>
            <person name="Bass S."/>
            <person name="Linher K.D."/>
            <person name="Weidman J.F."/>
            <person name="Khouri H.M."/>
            <person name="Craven B."/>
            <person name="Bowman C."/>
            <person name="Dodson R.J."/>
            <person name="Gwinn M.L."/>
            <person name="Nelson W.C."/>
            <person name="DeBoy R.T."/>
            <person name="Kolonay J.F."/>
            <person name="McClarty G."/>
            <person name="Salzberg S.L."/>
            <person name="Eisen J.A."/>
            <person name="Fraser C.M."/>
        </authorList>
    </citation>
    <scope>NUCLEOTIDE SEQUENCE [LARGE SCALE GENOMIC DNA]</scope>
    <source>
        <strain>MoPn / Nigg</strain>
    </source>
</reference>